<reference key="1">
    <citation type="journal article" date="1997" name="Nature">
        <title>The nucleotide sequence of Saccharomyces cerevisiae chromosome XII.</title>
        <authorList>
            <person name="Johnston M."/>
            <person name="Hillier L.W."/>
            <person name="Riles L."/>
            <person name="Albermann K."/>
            <person name="Andre B."/>
            <person name="Ansorge W."/>
            <person name="Benes V."/>
            <person name="Brueckner M."/>
            <person name="Delius H."/>
            <person name="Dubois E."/>
            <person name="Duesterhoeft A."/>
            <person name="Entian K.-D."/>
            <person name="Floeth M."/>
            <person name="Goffeau A."/>
            <person name="Hebling U."/>
            <person name="Heumann K."/>
            <person name="Heuss-Neitzel D."/>
            <person name="Hilbert H."/>
            <person name="Hilger F."/>
            <person name="Kleine K."/>
            <person name="Koetter P."/>
            <person name="Louis E.J."/>
            <person name="Messenguy F."/>
            <person name="Mewes H.-W."/>
            <person name="Miosga T."/>
            <person name="Moestl D."/>
            <person name="Mueller-Auer S."/>
            <person name="Nentwich U."/>
            <person name="Obermaier B."/>
            <person name="Piravandi E."/>
            <person name="Pohl T.M."/>
            <person name="Portetelle D."/>
            <person name="Purnelle B."/>
            <person name="Rechmann S."/>
            <person name="Rieger M."/>
            <person name="Rinke M."/>
            <person name="Rose M."/>
            <person name="Scharfe M."/>
            <person name="Scherens B."/>
            <person name="Scholler P."/>
            <person name="Schwager C."/>
            <person name="Schwarz S."/>
            <person name="Underwood A.P."/>
            <person name="Urrestarazu L.A."/>
            <person name="Vandenbol M."/>
            <person name="Verhasselt P."/>
            <person name="Vierendeels F."/>
            <person name="Voet M."/>
            <person name="Volckaert G."/>
            <person name="Voss H."/>
            <person name="Wambutt R."/>
            <person name="Wedler E."/>
            <person name="Wedler H."/>
            <person name="Zimmermann F.K."/>
            <person name="Zollner A."/>
            <person name="Hani J."/>
            <person name="Hoheisel J.D."/>
        </authorList>
    </citation>
    <scope>NUCLEOTIDE SEQUENCE [LARGE SCALE GENOMIC DNA]</scope>
    <source>
        <strain>ATCC 204508 / S288c</strain>
    </source>
</reference>
<reference key="2">
    <citation type="journal article" date="2014" name="G3 (Bethesda)">
        <title>The reference genome sequence of Saccharomyces cerevisiae: Then and now.</title>
        <authorList>
            <person name="Engel S.R."/>
            <person name="Dietrich F.S."/>
            <person name="Fisk D.G."/>
            <person name="Binkley G."/>
            <person name="Balakrishnan R."/>
            <person name="Costanzo M.C."/>
            <person name="Dwight S.S."/>
            <person name="Hitz B.C."/>
            <person name="Karra K."/>
            <person name="Nash R.S."/>
            <person name="Weng S."/>
            <person name="Wong E.D."/>
            <person name="Lloyd P."/>
            <person name="Skrzypek M.S."/>
            <person name="Miyasato S.R."/>
            <person name="Simison M."/>
            <person name="Cherry J.M."/>
        </authorList>
    </citation>
    <scope>GENOME REANNOTATION</scope>
    <source>
        <strain>ATCC 204508 / S288c</strain>
    </source>
</reference>
<reference key="3">
    <citation type="journal article" date="1997" name="Yeast">
        <title>Who's who among the Saccharomyces cerevisiae actin-related proteins? A classification and nomenclature proposal for a large family.</title>
        <authorList>
            <person name="Poch O."/>
            <person name="Winsor B."/>
        </authorList>
    </citation>
    <scope>NOMENCLATURE</scope>
</reference>
<reference key="4">
    <citation type="journal article" date="2003" name="Mol. Cell">
        <title>A Snf2 family ATPase complex required for recruitment of the histone H2A variant Htz1.</title>
        <authorList>
            <person name="Krogan N.J."/>
            <person name="Keogh M.-C."/>
            <person name="Datta N."/>
            <person name="Sawa C."/>
            <person name="Ryan O.W."/>
            <person name="Ding H."/>
            <person name="Haw R.A."/>
            <person name="Pootoolal J."/>
            <person name="Tong A."/>
            <person name="Canadien V."/>
            <person name="Richards D.P."/>
            <person name="Wu X."/>
            <person name="Emili A."/>
            <person name="Hughes T.R."/>
            <person name="Buratowski S."/>
            <person name="Greenblatt J.F."/>
        </authorList>
    </citation>
    <scope>IDENTIFICATION IN THE SWR1 COMPLEX</scope>
    <scope>FUNCTION OF THE SWR1 COMPLEX</scope>
    <scope>IDENTIFICATION BY MASS SPECTROMETRY</scope>
</reference>
<reference key="5">
    <citation type="journal article" date="2003" name="Nature">
        <title>Global analysis of protein localization in budding yeast.</title>
        <authorList>
            <person name="Huh W.-K."/>
            <person name="Falvo J.V."/>
            <person name="Gerke L.C."/>
            <person name="Carroll A.S."/>
            <person name="Howson R.W."/>
            <person name="Weissman J.S."/>
            <person name="O'Shea E.K."/>
        </authorList>
    </citation>
    <scope>SUBCELLULAR LOCATION [LARGE SCALE ANALYSIS]</scope>
</reference>
<reference key="6">
    <citation type="journal article" date="2003" name="Nature">
        <title>Global analysis of protein expression in yeast.</title>
        <authorList>
            <person name="Ghaemmaghami S."/>
            <person name="Huh W.-K."/>
            <person name="Bower K."/>
            <person name="Howson R.W."/>
            <person name="Belle A."/>
            <person name="Dephoure N."/>
            <person name="O'Shea E.K."/>
            <person name="Weissman J.S."/>
        </authorList>
    </citation>
    <scope>LEVEL OF PROTEIN EXPRESSION [LARGE SCALE ANALYSIS]</scope>
</reference>
<reference key="7">
    <citation type="journal article" date="2004" name="PLoS Biol.">
        <title>A protein complex containing the conserved Swi2/Snf2-related ATPase Swr1p deposits histone variant H2A.Z into euchromatin.</title>
        <authorList>
            <person name="Kobor M.S."/>
            <person name="Venkatasubrahmanyam S."/>
            <person name="Meneghini M.D."/>
            <person name="Gin J.W."/>
            <person name="Jennings J.L."/>
            <person name="Link A.J."/>
            <person name="Madhani H.D."/>
            <person name="Rine J."/>
        </authorList>
    </citation>
    <scope>IDENTIFICATION IN THE SWR1 COMPLEX</scope>
    <scope>FUNCTION OF THE SWR1 COMPLEX</scope>
    <scope>IDENTIFICATION BY MASS SPECTROMETRY</scope>
</reference>
<reference key="8">
    <citation type="journal article" date="2004" name="Science">
        <title>ATP-driven exchange of histone H2AZ variant catalyzed by SWR1 chromatin remodeling complex.</title>
        <authorList>
            <person name="Mizuguchi G."/>
            <person name="Shen X."/>
            <person name="Landry J."/>
            <person name="Wu W.-H."/>
            <person name="Sen S."/>
            <person name="Wu C."/>
        </authorList>
    </citation>
    <scope>IDENTIFICATION IN THE SWR1 COMPLEX</scope>
    <scope>FUNCTION OF THE SWR1 COMPLEX</scope>
    <scope>IDENTIFICATION BY MASS SPECTROMETRY</scope>
</reference>
<protein>
    <recommendedName>
        <fullName>Actin-like protein ARP6</fullName>
    </recommendedName>
</protein>
<dbReference type="EMBL" id="U53880">
    <property type="protein sequence ID" value="AAB67589.1"/>
    <property type="molecule type" value="Genomic_DNA"/>
</dbReference>
<dbReference type="EMBL" id="Z73257">
    <property type="protein sequence ID" value="CAA97645.1"/>
    <property type="molecule type" value="Genomic_DNA"/>
</dbReference>
<dbReference type="EMBL" id="BK006945">
    <property type="protein sequence ID" value="DAA09401.1"/>
    <property type="molecule type" value="Genomic_DNA"/>
</dbReference>
<dbReference type="PIR" id="S64917">
    <property type="entry name" value="S64917"/>
</dbReference>
<dbReference type="RefSeq" id="NP_013186.1">
    <property type="nucleotide sequence ID" value="NM_001181972.1"/>
</dbReference>
<dbReference type="PDB" id="6GEJ">
    <property type="method" value="EM"/>
    <property type="resolution" value="3.60 A"/>
    <property type="chains" value="R=1-438"/>
</dbReference>
<dbReference type="PDB" id="6GEN">
    <property type="method" value="EM"/>
    <property type="resolution" value="3.60 A"/>
    <property type="chains" value="R=1-438"/>
</dbReference>
<dbReference type="PDB" id="8QKU">
    <property type="method" value="EM"/>
    <property type="resolution" value="3.80 A"/>
    <property type="chains" value="R=1-438"/>
</dbReference>
<dbReference type="PDB" id="8QKV">
    <property type="method" value="EM"/>
    <property type="resolution" value="4.70 A"/>
    <property type="chains" value="R=1-438"/>
</dbReference>
<dbReference type="PDB" id="8QYV">
    <property type="method" value="EM"/>
    <property type="resolution" value="3.50 A"/>
    <property type="chains" value="R=1-438"/>
</dbReference>
<dbReference type="PDB" id="8QZ0">
    <property type="method" value="EM"/>
    <property type="resolution" value="3.80 A"/>
    <property type="chains" value="R=1-438"/>
</dbReference>
<dbReference type="PDB" id="9B1D">
    <property type="method" value="EM"/>
    <property type="resolution" value="3.30 A"/>
    <property type="chains" value="C=1-438"/>
</dbReference>
<dbReference type="PDB" id="9B1E">
    <property type="method" value="EM"/>
    <property type="resolution" value="4.40 A"/>
    <property type="chains" value="C=1-438"/>
</dbReference>
<dbReference type="PDB" id="9FBW">
    <property type="method" value="EM"/>
    <property type="resolution" value="4.40 A"/>
    <property type="chains" value="R=1-438"/>
</dbReference>
<dbReference type="PDBsum" id="6GEJ"/>
<dbReference type="PDBsum" id="6GEN"/>
<dbReference type="PDBsum" id="8QKU"/>
<dbReference type="PDBsum" id="8QKV"/>
<dbReference type="PDBsum" id="8QYV"/>
<dbReference type="PDBsum" id="8QZ0"/>
<dbReference type="PDBsum" id="9B1D"/>
<dbReference type="PDBsum" id="9B1E"/>
<dbReference type="PDBsum" id="9FBW"/>
<dbReference type="EMDB" id="EMD-18471"/>
<dbReference type="EMDB" id="EMD-18472"/>
<dbReference type="EMDB" id="EMD-18764"/>
<dbReference type="EMDB" id="EMD-18769"/>
<dbReference type="EMDB" id="EMD-4395"/>
<dbReference type="EMDB" id="EMD-4396"/>
<dbReference type="EMDB" id="EMD-44074"/>
<dbReference type="EMDB" id="EMD-44075"/>
<dbReference type="EMDB" id="EMD-50297"/>
<dbReference type="SMR" id="Q12509"/>
<dbReference type="BioGRID" id="31358">
    <property type="interactions" value="769"/>
</dbReference>
<dbReference type="ComplexPortal" id="CPX-2122">
    <property type="entry name" value="Swr1 chromatin remodelling complex"/>
</dbReference>
<dbReference type="DIP" id="DIP-5169N"/>
<dbReference type="FunCoup" id="Q12509">
    <property type="interactions" value="421"/>
</dbReference>
<dbReference type="IntAct" id="Q12509">
    <property type="interactions" value="21"/>
</dbReference>
<dbReference type="MINT" id="Q12509"/>
<dbReference type="STRING" id="4932.YLR085C"/>
<dbReference type="iPTMnet" id="Q12509"/>
<dbReference type="PaxDb" id="4932-YLR085C"/>
<dbReference type="PeptideAtlas" id="Q12509"/>
<dbReference type="EnsemblFungi" id="YLR085C_mRNA">
    <property type="protein sequence ID" value="YLR085C"/>
    <property type="gene ID" value="YLR085C"/>
</dbReference>
<dbReference type="GeneID" id="850774"/>
<dbReference type="KEGG" id="sce:YLR085C"/>
<dbReference type="AGR" id="SGD:S000004075"/>
<dbReference type="SGD" id="S000004075">
    <property type="gene designation" value="ARP6"/>
</dbReference>
<dbReference type="VEuPathDB" id="FungiDB:YLR085C"/>
<dbReference type="eggNOG" id="KOG0680">
    <property type="taxonomic scope" value="Eukaryota"/>
</dbReference>
<dbReference type="GeneTree" id="ENSGT00720000108833"/>
<dbReference type="HOGENOM" id="CLU_027965_1_1_1"/>
<dbReference type="InParanoid" id="Q12509"/>
<dbReference type="OMA" id="FFEEYEC"/>
<dbReference type="OrthoDB" id="6220758at2759"/>
<dbReference type="BioCyc" id="YEAST:G3O-32236-MONOMER"/>
<dbReference type="BioGRID-ORCS" id="850774">
    <property type="hits" value="0 hits in 10 CRISPR screens"/>
</dbReference>
<dbReference type="PRO" id="PR:Q12509"/>
<dbReference type="Proteomes" id="UP000002311">
    <property type="component" value="Chromosome XII"/>
</dbReference>
<dbReference type="RNAct" id="Q12509">
    <property type="molecule type" value="protein"/>
</dbReference>
<dbReference type="GO" id="GO:0000785">
    <property type="term" value="C:chromatin"/>
    <property type="evidence" value="ECO:0000314"/>
    <property type="project" value="ComplexPortal"/>
</dbReference>
<dbReference type="GO" id="GO:0005737">
    <property type="term" value="C:cytoplasm"/>
    <property type="evidence" value="ECO:0000314"/>
    <property type="project" value="SGD"/>
</dbReference>
<dbReference type="GO" id="GO:0034399">
    <property type="term" value="C:nuclear periphery"/>
    <property type="evidence" value="ECO:0000314"/>
    <property type="project" value="SGD"/>
</dbReference>
<dbReference type="GO" id="GO:0000812">
    <property type="term" value="C:Swr1 complex"/>
    <property type="evidence" value="ECO:0000314"/>
    <property type="project" value="SGD"/>
</dbReference>
<dbReference type="GO" id="GO:0031491">
    <property type="term" value="F:nucleosome binding"/>
    <property type="evidence" value="ECO:0000315"/>
    <property type="project" value="SGD"/>
</dbReference>
<dbReference type="GO" id="GO:0006338">
    <property type="term" value="P:chromatin remodeling"/>
    <property type="evidence" value="ECO:0000314"/>
    <property type="project" value="SGD"/>
</dbReference>
<dbReference type="GO" id="GO:0006355">
    <property type="term" value="P:regulation of DNA-templated transcription"/>
    <property type="evidence" value="ECO:0000303"/>
    <property type="project" value="ComplexPortal"/>
</dbReference>
<dbReference type="CDD" id="cd10210">
    <property type="entry name" value="ASKHA_NBD_Arp6"/>
    <property type="match status" value="1"/>
</dbReference>
<dbReference type="FunFam" id="3.30.420.40:FF:000193">
    <property type="entry name" value="Actin-like protein ARP6"/>
    <property type="match status" value="1"/>
</dbReference>
<dbReference type="FunFam" id="3.90.640.10:FF:000040">
    <property type="entry name" value="Actin-like protein ARP6"/>
    <property type="match status" value="1"/>
</dbReference>
<dbReference type="Gene3D" id="3.30.420.40">
    <property type="match status" value="2"/>
</dbReference>
<dbReference type="Gene3D" id="3.90.640.10">
    <property type="entry name" value="Actin, Chain A, domain 4"/>
    <property type="match status" value="1"/>
</dbReference>
<dbReference type="InterPro" id="IPR004000">
    <property type="entry name" value="Actin"/>
</dbReference>
<dbReference type="InterPro" id="IPR043129">
    <property type="entry name" value="ATPase_NBD"/>
</dbReference>
<dbReference type="PANTHER" id="PTHR11937">
    <property type="entry name" value="ACTIN"/>
    <property type="match status" value="1"/>
</dbReference>
<dbReference type="Pfam" id="PF00022">
    <property type="entry name" value="Actin"/>
    <property type="match status" value="1"/>
</dbReference>
<dbReference type="SMART" id="SM00268">
    <property type="entry name" value="ACTIN"/>
    <property type="match status" value="1"/>
</dbReference>
<dbReference type="SUPFAM" id="SSF53067">
    <property type="entry name" value="Actin-like ATPase domain"/>
    <property type="match status" value="2"/>
</dbReference>
<evidence type="ECO:0000256" key="1">
    <source>
        <dbReference type="SAM" id="MobiDB-lite"/>
    </source>
</evidence>
<evidence type="ECO:0000269" key="2">
    <source>
    </source>
</evidence>
<evidence type="ECO:0000269" key="3">
    <source>
    </source>
</evidence>
<evidence type="ECO:0000269" key="4">
    <source>
    </source>
</evidence>
<evidence type="ECO:0000269" key="5">
    <source>
    </source>
</evidence>
<evidence type="ECO:0000269" key="6">
    <source>
    </source>
</evidence>
<evidence type="ECO:0000305" key="7"/>
<name>ARP6_YEAST</name>
<proteinExistence type="evidence at protein level"/>
<comment type="function">
    <text evidence="4 5 6">Component of the SWR1 complex which mediates the ATP-dependent exchange of histone H2A for the H2A variant HZT1 leading to transcriptional regulation of selected genes by chromatin remodeling. Involved in chromosome stability.</text>
</comment>
<comment type="subunit">
    <text evidence="4 5 6">Component of the SWR1 chromatin remodeling complex composed of at least ACT1, ARP4, RVB1, RVB2, ARP6, YAF9, VPS71, VPS72, SWC3, SWC4, SWC5, SWC7 and SWR1, and perhaps BDF1.</text>
</comment>
<comment type="interaction">
    <interactant intactId="EBI-2957">
        <id>Q12509</id>
    </interactant>
    <interactant intactId="EBI-27814">
        <id>Q03433</id>
        <label>VPS71</label>
    </interactant>
    <organismsDiffer>false</organismsDiffer>
    <experiments>4</experiments>
</comment>
<comment type="subcellular location">
    <subcellularLocation>
        <location evidence="2">Cytoplasm</location>
    </subcellularLocation>
    <subcellularLocation>
        <location evidence="2">Nucleus</location>
    </subcellularLocation>
</comment>
<comment type="miscellaneous">
    <text evidence="3">Present with 238 molecules/cell in log phase SD medium.</text>
</comment>
<comment type="similarity">
    <text evidence="7">Belongs to the actin family. ARP6 subfamily.</text>
</comment>
<organism>
    <name type="scientific">Saccharomyces cerevisiae (strain ATCC 204508 / S288c)</name>
    <name type="common">Baker's yeast</name>
    <dbReference type="NCBI Taxonomy" id="559292"/>
    <lineage>
        <taxon>Eukaryota</taxon>
        <taxon>Fungi</taxon>
        <taxon>Dikarya</taxon>
        <taxon>Ascomycota</taxon>
        <taxon>Saccharomycotina</taxon>
        <taxon>Saccharomycetes</taxon>
        <taxon>Saccharomycetales</taxon>
        <taxon>Saccharomycetaceae</taxon>
        <taxon>Saccharomyces</taxon>
    </lineage>
</organism>
<accession>Q12509</accession>
<accession>D6VY85</accession>
<keyword id="KW-0002">3D-structure</keyword>
<keyword id="KW-0010">Activator</keyword>
<keyword id="KW-0156">Chromatin regulator</keyword>
<keyword id="KW-0963">Cytoplasm</keyword>
<keyword id="KW-0539">Nucleus</keyword>
<keyword id="KW-1185">Reference proteome</keyword>
<keyword id="KW-0804">Transcription</keyword>
<keyword id="KW-0805">Transcription regulation</keyword>
<feature type="chain" id="PRO_0000089121" description="Actin-like protein ARP6">
    <location>
        <begin position="1"/>
        <end position="438"/>
    </location>
</feature>
<feature type="region of interest" description="Disordered" evidence="1">
    <location>
        <begin position="158"/>
        <end position="181"/>
    </location>
</feature>
<feature type="compositionally biased region" description="Low complexity" evidence="1">
    <location>
        <begin position="163"/>
        <end position="174"/>
    </location>
</feature>
<gene>
    <name type="primary">ARP6</name>
    <name type="ordered locus">YLR085C</name>
    <name type="ORF">L2393</name>
    <name type="ORF">L9449.13</name>
</gene>
<sequence>METPPIVIDNGSYEIKFGPSTNKKPFRALNALAKDKFGTSYLSNHIKNIKDISSITFRRPHELGQLTLWELESCIWDYCLFNPSEFDGFDLKEGKGHHLVASESCMTLPELSKHADQVIFEEYEFDSLFKSPVAVFVPFTKSYKGEMRTISGKDEDIDIVRGNSDSTNSTSSESKNAQDSGSDYHDFQLVIDSGFNCTWIIPVLKGIPYYKAVKKLDIGGRFLTGLLKETLSFRHYNMMDETILVNNIKEQCLFVSPVSYFDSFKTKDKHALEYVLPDFQTSFLGYVRNPRKENVPLPEDAQIITLTDELFTIPETFFHPEISQITKPGIVEAILESLSMLPEIVRPLMVGNIVCTGGNFNLPNFAQRLAAELQRQLPTDWTCHVSVPEGDCALFGWEVMSQFAKTDSYRKARVTREEYYEHGPDWCTKHRFGYQNWI</sequence>